<evidence type="ECO:0000255" key="1"/>
<evidence type="ECO:0000305" key="2"/>
<sequence length="288" mass="31077">MEGLLIALIPMFAWGSIGFVSNKIGGRPNQQTFGMTLGALLFAIIVWLFKQPEMTASLWIFGILGGILWSVGQNGQFQAMKYMGVSVANPLSSGAQLVGGSLVGALVFHEWTKPIQFILGLTALTLLVIGFYFSSKRDVSEQALATHQEFSKGFATIAYSTVGYISYAVLFNNIMKFDAMAVILPMAVGMCLGAICFMKFRVNFEAVVVKNMITGLMWGVGNVFMLLAAAKAGLAIAFSFSQLGVIISIIGGILFLGETKTKKEQKWVVMGILCFVMGAILLGIVKSY</sequence>
<gene>
    <name type="ordered locus">SAG2157</name>
</gene>
<keyword id="KW-1003">Cell membrane</keyword>
<keyword id="KW-0472">Membrane</keyword>
<keyword id="KW-1185">Reference proteome</keyword>
<keyword id="KW-0762">Sugar transport</keyword>
<keyword id="KW-0812">Transmembrane</keyword>
<keyword id="KW-1133">Transmembrane helix</keyword>
<keyword id="KW-0813">Transport</keyword>
<feature type="chain" id="PRO_0000213662" description="Putative sugar uptake protein SAG2157">
    <location>
        <begin position="1"/>
        <end position="288"/>
    </location>
</feature>
<feature type="transmembrane region" description="Helical" evidence="1">
    <location>
        <begin position="4"/>
        <end position="26"/>
    </location>
</feature>
<feature type="transmembrane region" description="Helical" evidence="1">
    <location>
        <begin position="33"/>
        <end position="50"/>
    </location>
</feature>
<feature type="transmembrane region" description="Helical" evidence="1">
    <location>
        <begin position="55"/>
        <end position="72"/>
    </location>
</feature>
<feature type="transmembrane region" description="Helical" evidence="1">
    <location>
        <begin position="85"/>
        <end position="107"/>
    </location>
</feature>
<feature type="transmembrane region" description="Helical" evidence="1">
    <location>
        <begin position="117"/>
        <end position="134"/>
    </location>
</feature>
<feature type="transmembrane region" description="Helical" evidence="1">
    <location>
        <begin position="154"/>
        <end position="171"/>
    </location>
</feature>
<feature type="transmembrane region" description="Helical" evidence="1">
    <location>
        <begin position="181"/>
        <end position="200"/>
    </location>
</feature>
<feature type="transmembrane region" description="Helical" evidence="1">
    <location>
        <begin position="207"/>
        <end position="229"/>
    </location>
</feature>
<feature type="transmembrane region" description="Helical" evidence="1">
    <location>
        <begin position="234"/>
        <end position="256"/>
    </location>
</feature>
<feature type="transmembrane region" description="Helical" evidence="1">
    <location>
        <begin position="268"/>
        <end position="285"/>
    </location>
</feature>
<comment type="subcellular location">
    <subcellularLocation>
        <location evidence="2">Cell membrane</location>
        <topology evidence="2">Multi-pass membrane protein</topology>
    </subcellularLocation>
</comment>
<comment type="similarity">
    <text evidence="2">Belongs to the GRP transporter (TC 2.A.7.5) family.</text>
</comment>
<comment type="sequence caution" evidence="2">
    <conflict type="erroneous initiation">
        <sequence resource="EMBL-CDS" id="AAN01015"/>
    </conflict>
</comment>
<organism>
    <name type="scientific">Streptococcus agalactiae serotype V (strain ATCC BAA-611 / 2603 V/R)</name>
    <dbReference type="NCBI Taxonomy" id="208435"/>
    <lineage>
        <taxon>Bacteria</taxon>
        <taxon>Bacillati</taxon>
        <taxon>Bacillota</taxon>
        <taxon>Bacilli</taxon>
        <taxon>Lactobacillales</taxon>
        <taxon>Streptococcaceae</taxon>
        <taxon>Streptococcus</taxon>
    </lineage>
</organism>
<reference key="1">
    <citation type="journal article" date="2002" name="Proc. Natl. Acad. Sci. U.S.A.">
        <title>Complete genome sequence and comparative genomic analysis of an emerging human pathogen, serotype V Streptococcus agalactiae.</title>
        <authorList>
            <person name="Tettelin H."/>
            <person name="Masignani V."/>
            <person name="Cieslewicz M.J."/>
            <person name="Eisen J.A."/>
            <person name="Peterson S.N."/>
            <person name="Wessels M.R."/>
            <person name="Paulsen I.T."/>
            <person name="Nelson K.E."/>
            <person name="Margarit I."/>
            <person name="Read T.D."/>
            <person name="Madoff L.C."/>
            <person name="Wolf A.M."/>
            <person name="Beanan M.J."/>
            <person name="Brinkac L.M."/>
            <person name="Daugherty S.C."/>
            <person name="DeBoy R.T."/>
            <person name="Durkin A.S."/>
            <person name="Kolonay J.F."/>
            <person name="Madupu R."/>
            <person name="Lewis M.R."/>
            <person name="Radune D."/>
            <person name="Fedorova N.B."/>
            <person name="Scanlan D."/>
            <person name="Khouri H.M."/>
            <person name="Mulligan S."/>
            <person name="Carty H.A."/>
            <person name="Cline R.T."/>
            <person name="Van Aken S.E."/>
            <person name="Gill J."/>
            <person name="Scarselli M."/>
            <person name="Mora M."/>
            <person name="Iacobini E.T."/>
            <person name="Brettoni C."/>
            <person name="Galli G."/>
            <person name="Mariani M."/>
            <person name="Vegni F."/>
            <person name="Maione D."/>
            <person name="Rinaudo D."/>
            <person name="Rappuoli R."/>
            <person name="Telford J.L."/>
            <person name="Kasper D.L."/>
            <person name="Grandi G."/>
            <person name="Fraser C.M."/>
        </authorList>
    </citation>
    <scope>NUCLEOTIDE SEQUENCE [LARGE SCALE GENOMIC DNA]</scope>
    <source>
        <strain>ATCC BAA-611 / 2603 V/R</strain>
    </source>
</reference>
<accession>Q8DWQ7</accession>
<protein>
    <recommendedName>
        <fullName>Putative sugar uptake protein SAG2157</fullName>
    </recommendedName>
</protein>
<proteinExistence type="inferred from homology"/>
<name>Y2157_STRA5</name>
<dbReference type="EMBL" id="AE009948">
    <property type="protein sequence ID" value="AAN01015.1"/>
    <property type="status" value="ALT_INIT"/>
    <property type="molecule type" value="Genomic_DNA"/>
</dbReference>
<dbReference type="RefSeq" id="NP_689142.1">
    <property type="nucleotide sequence ID" value="NC_004116.1"/>
</dbReference>
<dbReference type="RefSeq" id="WP_000398683.1">
    <property type="nucleotide sequence ID" value="NC_004116.1"/>
</dbReference>
<dbReference type="SMR" id="Q8DWQ7"/>
<dbReference type="STRING" id="208435.SAG2157"/>
<dbReference type="DNASU" id="1014968"/>
<dbReference type="KEGG" id="sag:SAG2157"/>
<dbReference type="PATRIC" id="fig|208435.3.peg.2160"/>
<dbReference type="HOGENOM" id="CLU_076024_0_0_9"/>
<dbReference type="OrthoDB" id="1452595at2"/>
<dbReference type="Proteomes" id="UP000000821">
    <property type="component" value="Chromosome"/>
</dbReference>
<dbReference type="GO" id="GO:0005886">
    <property type="term" value="C:plasma membrane"/>
    <property type="evidence" value="ECO:0007669"/>
    <property type="project" value="UniProtKB-SubCell"/>
</dbReference>
<dbReference type="GO" id="GO:0015144">
    <property type="term" value="F:carbohydrate transmembrane transporter activity"/>
    <property type="evidence" value="ECO:0007669"/>
    <property type="project" value="InterPro"/>
</dbReference>
<dbReference type="CDD" id="cd23110">
    <property type="entry name" value="GRP"/>
    <property type="match status" value="1"/>
</dbReference>
<dbReference type="InterPro" id="IPR010651">
    <property type="entry name" value="Sugar_transport"/>
</dbReference>
<dbReference type="PANTHER" id="PTHR16119">
    <property type="entry name" value="TRANSMEMBRANE PROTEIN 144"/>
    <property type="match status" value="1"/>
</dbReference>
<dbReference type="PANTHER" id="PTHR16119:SF17">
    <property type="entry name" value="TRANSMEMBRANE PROTEIN 144"/>
    <property type="match status" value="1"/>
</dbReference>
<dbReference type="Pfam" id="PF06800">
    <property type="entry name" value="Sugar_transport"/>
    <property type="match status" value="1"/>
</dbReference>
<dbReference type="SUPFAM" id="SSF103481">
    <property type="entry name" value="Multidrug resistance efflux transporter EmrE"/>
    <property type="match status" value="2"/>
</dbReference>